<organism>
    <name type="scientific">Haemophilus influenzae (strain ATCC 51907 / DSM 11121 / KW20 / Rd)</name>
    <dbReference type="NCBI Taxonomy" id="71421"/>
    <lineage>
        <taxon>Bacteria</taxon>
        <taxon>Pseudomonadati</taxon>
        <taxon>Pseudomonadota</taxon>
        <taxon>Gammaproteobacteria</taxon>
        <taxon>Pasteurellales</taxon>
        <taxon>Pasteurellaceae</taxon>
        <taxon>Haemophilus</taxon>
    </lineage>
</organism>
<proteinExistence type="evidence at protein level"/>
<gene>
    <name type="ordered locus">HI_1008</name>
</gene>
<evidence type="ECO:0000255" key="1"/>
<name>Y1008_HAEIN</name>
<sequence length="112" mass="11975">MKTLFTSVVLCGALVVSSSFAEEKATXQTAQSVVTTQAEAQVAPAVVSDKLNINTATASEIQKSLTGIGAKKAEAIVQYREKHGNFXNAEQLLEVQGIGKATLEKNRDRIIF</sequence>
<accession>Q57134</accession>
<dbReference type="EMBL" id="L42023">
    <property type="protein sequence ID" value="AAC22669.1"/>
    <property type="molecule type" value="Genomic_DNA"/>
</dbReference>
<dbReference type="PIR" id="I64107">
    <property type="entry name" value="I64107"/>
</dbReference>
<dbReference type="RefSeq" id="NP_439169.1">
    <property type="nucleotide sequence ID" value="NC_000907.1"/>
</dbReference>
<dbReference type="STRING" id="71421.HI_1008"/>
<dbReference type="TCDB" id="3.A.11.2.2">
    <property type="family name" value="the bacterial competence-related dna transformation transporter (dna-t) family"/>
</dbReference>
<dbReference type="DNASU" id="950002"/>
<dbReference type="EnsemblBacteria" id="AAC22669">
    <property type="protein sequence ID" value="AAC22669"/>
    <property type="gene ID" value="HI_1008"/>
</dbReference>
<dbReference type="KEGG" id="hin:HI_1008"/>
<dbReference type="PATRIC" id="fig|71421.8.peg.1052"/>
<dbReference type="eggNOG" id="COG1555">
    <property type="taxonomic scope" value="Bacteria"/>
</dbReference>
<dbReference type="HOGENOM" id="CLU_052011_3_1_6"/>
<dbReference type="OrthoDB" id="7510573at2"/>
<dbReference type="PhylomeDB" id="Q57134"/>
<dbReference type="BioCyc" id="HINF71421:G1GJ1-1048-MONOMER"/>
<dbReference type="Proteomes" id="UP000000579">
    <property type="component" value="Chromosome"/>
</dbReference>
<dbReference type="GO" id="GO:0015627">
    <property type="term" value="C:type II protein secretion system complex"/>
    <property type="evidence" value="ECO:0000318"/>
    <property type="project" value="GO_Central"/>
</dbReference>
<dbReference type="GO" id="GO:0015628">
    <property type="term" value="P:protein secretion by the type II secretion system"/>
    <property type="evidence" value="ECO:0000318"/>
    <property type="project" value="GO_Central"/>
</dbReference>
<dbReference type="Gene3D" id="1.10.150.280">
    <property type="entry name" value="AF1531-like domain"/>
    <property type="match status" value="1"/>
</dbReference>
<dbReference type="InterPro" id="IPR004509">
    <property type="entry name" value="Competence_ComEA_HhH"/>
</dbReference>
<dbReference type="InterPro" id="IPR051675">
    <property type="entry name" value="Endo/Exo/Phosphatase_dom_1"/>
</dbReference>
<dbReference type="InterPro" id="IPR010994">
    <property type="entry name" value="RuvA_2-like"/>
</dbReference>
<dbReference type="NCBIfam" id="TIGR00426">
    <property type="entry name" value="competence protein ComEA helix-hairpin-helix repeat region"/>
    <property type="match status" value="1"/>
</dbReference>
<dbReference type="PANTHER" id="PTHR21180">
    <property type="entry name" value="ENDONUCLEASE/EXONUCLEASE/PHOSPHATASE FAMILY DOMAIN-CONTAINING PROTEIN 1"/>
    <property type="match status" value="1"/>
</dbReference>
<dbReference type="PANTHER" id="PTHR21180:SF32">
    <property type="entry name" value="ENDONUCLEASE_EXONUCLEASE_PHOSPHATASE FAMILY DOMAIN-CONTAINING PROTEIN 1"/>
    <property type="match status" value="1"/>
</dbReference>
<dbReference type="Pfam" id="PF12836">
    <property type="entry name" value="HHH_3"/>
    <property type="match status" value="1"/>
</dbReference>
<dbReference type="SUPFAM" id="SSF47781">
    <property type="entry name" value="RuvA domain 2-like"/>
    <property type="match status" value="1"/>
</dbReference>
<protein>
    <recommendedName>
        <fullName>Uncharacterized protein HI_1008</fullName>
    </recommendedName>
</protein>
<reference key="1">
    <citation type="journal article" date="1995" name="Science">
        <title>Whole-genome random sequencing and assembly of Haemophilus influenzae Rd.</title>
        <authorList>
            <person name="Fleischmann R.D."/>
            <person name="Adams M.D."/>
            <person name="White O."/>
            <person name="Clayton R.A."/>
            <person name="Kirkness E.F."/>
            <person name="Kerlavage A.R."/>
            <person name="Bult C.J."/>
            <person name="Tomb J.-F."/>
            <person name="Dougherty B.A."/>
            <person name="Merrick J.M."/>
            <person name="McKenney K."/>
            <person name="Sutton G.G."/>
            <person name="FitzHugh W."/>
            <person name="Fields C.A."/>
            <person name="Gocayne J.D."/>
            <person name="Scott J.D."/>
            <person name="Shirley R."/>
            <person name="Liu L.-I."/>
            <person name="Glodek A."/>
            <person name="Kelley J.M."/>
            <person name="Weidman J.F."/>
            <person name="Phillips C.A."/>
            <person name="Spriggs T."/>
            <person name="Hedblom E."/>
            <person name="Cotton M.D."/>
            <person name="Utterback T.R."/>
            <person name="Hanna M.C."/>
            <person name="Nguyen D.T."/>
            <person name="Saudek D.M."/>
            <person name="Brandon R.C."/>
            <person name="Fine L.D."/>
            <person name="Fritchman J.L."/>
            <person name="Fuhrmann J.L."/>
            <person name="Geoghagen N.S.M."/>
            <person name="Gnehm C.L."/>
            <person name="McDonald L.A."/>
            <person name="Small K.V."/>
            <person name="Fraser C.M."/>
            <person name="Smith H.O."/>
            <person name="Venter J.C."/>
        </authorList>
    </citation>
    <scope>NUCLEOTIDE SEQUENCE [LARGE SCALE GENOMIC DNA]</scope>
    <source>
        <strain>ATCC 51907 / DSM 11121 / KW20 / Rd</strain>
    </source>
</reference>
<reference key="2">
    <citation type="journal article" date="2000" name="Electrophoresis">
        <title>Two-dimensional map of the proteome of Haemophilus influenzae.</title>
        <authorList>
            <person name="Langen H."/>
            <person name="Takacs B."/>
            <person name="Evers S."/>
            <person name="Berndt P."/>
            <person name="Lahm H.W."/>
            <person name="Wipf B."/>
            <person name="Gray C."/>
            <person name="Fountoulakis M."/>
        </authorList>
    </citation>
    <scope>PROTEIN SEQUENCE OF 22-26</scope>
    <source>
        <strain>ATCC 51907 / DSM 11121 / KW20 / Rd</strain>
    </source>
</reference>
<feature type="signal peptide" evidence="1">
    <location>
        <begin position="1"/>
        <end position="21"/>
    </location>
</feature>
<feature type="chain" id="PRO_0000013794" description="Uncharacterized protein HI_1008">
    <location>
        <begin position="22"/>
        <end position="112"/>
    </location>
</feature>
<feature type="domain" description="HhH 1">
    <location>
        <begin position="49"/>
        <end position="79"/>
    </location>
</feature>
<feature type="domain" description="HhH 2">
    <location>
        <begin position="80"/>
        <end position="109"/>
    </location>
</feature>
<keyword id="KW-0903">Direct protein sequencing</keyword>
<keyword id="KW-1185">Reference proteome</keyword>
<keyword id="KW-0677">Repeat</keyword>
<keyword id="KW-0732">Signal</keyword>